<name>SELA_ECO81</name>
<evidence type="ECO:0000255" key="1">
    <source>
        <dbReference type="HAMAP-Rule" id="MF_00423"/>
    </source>
</evidence>
<organism>
    <name type="scientific">Escherichia coli O81 (strain ED1a)</name>
    <dbReference type="NCBI Taxonomy" id="585397"/>
    <lineage>
        <taxon>Bacteria</taxon>
        <taxon>Pseudomonadati</taxon>
        <taxon>Pseudomonadota</taxon>
        <taxon>Gammaproteobacteria</taxon>
        <taxon>Enterobacterales</taxon>
        <taxon>Enterobacteriaceae</taxon>
        <taxon>Escherichia</taxon>
    </lineage>
</organism>
<protein>
    <recommendedName>
        <fullName evidence="1">L-seryl-tRNA(Sec) selenium transferase</fullName>
        <ecNumber evidence="1">2.9.1.1</ecNumber>
    </recommendedName>
    <alternativeName>
        <fullName evidence="1">Selenocysteine synthase</fullName>
        <shortName evidence="1">Sec synthase</shortName>
    </alternativeName>
    <alternativeName>
        <fullName evidence="1">Selenocysteinyl-tRNA(Sec) synthase</fullName>
    </alternativeName>
</protein>
<dbReference type="EC" id="2.9.1.1" evidence="1"/>
<dbReference type="EMBL" id="CU928162">
    <property type="protein sequence ID" value="CAR10408.2"/>
    <property type="molecule type" value="Genomic_DNA"/>
</dbReference>
<dbReference type="RefSeq" id="WP_000206254.1">
    <property type="nucleotide sequence ID" value="NC_011745.1"/>
</dbReference>
<dbReference type="SMR" id="B7N237"/>
<dbReference type="KEGG" id="ecq:ECED1_4277"/>
<dbReference type="HOGENOM" id="CLU_038142_1_0_6"/>
<dbReference type="UniPathway" id="UPA00906">
    <property type="reaction ID" value="UER00896"/>
</dbReference>
<dbReference type="Proteomes" id="UP000000748">
    <property type="component" value="Chromosome"/>
</dbReference>
<dbReference type="GO" id="GO:0005737">
    <property type="term" value="C:cytoplasm"/>
    <property type="evidence" value="ECO:0007669"/>
    <property type="project" value="UniProtKB-SubCell"/>
</dbReference>
<dbReference type="GO" id="GO:0004125">
    <property type="term" value="F:L-seryl-tRNA(Sec) selenium transferase activity"/>
    <property type="evidence" value="ECO:0007669"/>
    <property type="project" value="UniProtKB-UniRule"/>
</dbReference>
<dbReference type="GO" id="GO:0001717">
    <property type="term" value="P:conversion of seryl-tRNAsec to selenocys-tRNAsec"/>
    <property type="evidence" value="ECO:0007669"/>
    <property type="project" value="UniProtKB-UniRule"/>
</dbReference>
<dbReference type="GO" id="GO:0001514">
    <property type="term" value="P:selenocysteine incorporation"/>
    <property type="evidence" value="ECO:0007669"/>
    <property type="project" value="UniProtKB-UniRule"/>
</dbReference>
<dbReference type="FunFam" id="3.40.640.10:FF:000028">
    <property type="entry name" value="L-seryl-tRNA(Sec) selenium transferase"/>
    <property type="match status" value="1"/>
</dbReference>
<dbReference type="FunFam" id="3.90.1150.180:FF:000001">
    <property type="entry name" value="L-seryl-tRNA(Sec) selenium transferase"/>
    <property type="match status" value="1"/>
</dbReference>
<dbReference type="Gene3D" id="3.90.1150.180">
    <property type="match status" value="1"/>
</dbReference>
<dbReference type="Gene3D" id="3.40.640.10">
    <property type="entry name" value="Type I PLP-dependent aspartate aminotransferase-like (Major domain)"/>
    <property type="match status" value="1"/>
</dbReference>
<dbReference type="HAMAP" id="MF_00423">
    <property type="entry name" value="SelA"/>
    <property type="match status" value="1"/>
</dbReference>
<dbReference type="InterPro" id="IPR015424">
    <property type="entry name" value="PyrdxlP-dep_Trfase"/>
</dbReference>
<dbReference type="InterPro" id="IPR015421">
    <property type="entry name" value="PyrdxlP-dep_Trfase_major"/>
</dbReference>
<dbReference type="InterPro" id="IPR018319">
    <property type="entry name" value="SelA-like"/>
</dbReference>
<dbReference type="InterPro" id="IPR004534">
    <property type="entry name" value="SelA_trans"/>
</dbReference>
<dbReference type="InterPro" id="IPR025862">
    <property type="entry name" value="SelA_trans_N_dom"/>
</dbReference>
<dbReference type="NCBIfam" id="TIGR00474">
    <property type="entry name" value="selA"/>
    <property type="match status" value="1"/>
</dbReference>
<dbReference type="PANTHER" id="PTHR32328">
    <property type="entry name" value="L-SERYL-TRNA(SEC) SELENIUM TRANSFERASE"/>
    <property type="match status" value="1"/>
</dbReference>
<dbReference type="PANTHER" id="PTHR32328:SF0">
    <property type="entry name" value="L-SERYL-TRNA(SEC) SELENIUM TRANSFERASE"/>
    <property type="match status" value="1"/>
</dbReference>
<dbReference type="Pfam" id="PF12390">
    <property type="entry name" value="Se-cys_synth_N"/>
    <property type="match status" value="1"/>
</dbReference>
<dbReference type="Pfam" id="PF03841">
    <property type="entry name" value="SelA"/>
    <property type="match status" value="1"/>
</dbReference>
<dbReference type="SUPFAM" id="SSF53383">
    <property type="entry name" value="PLP-dependent transferases"/>
    <property type="match status" value="1"/>
</dbReference>
<gene>
    <name evidence="1" type="primary">selA</name>
    <name type="ordered locus">ECED1_4277</name>
</gene>
<feature type="chain" id="PRO_1000134923" description="L-seryl-tRNA(Sec) selenium transferase">
    <location>
        <begin position="1"/>
        <end position="463"/>
    </location>
</feature>
<feature type="modified residue" description="N6-(pyridoxal phosphate)lysine" evidence="1">
    <location>
        <position position="295"/>
    </location>
</feature>
<keyword id="KW-0963">Cytoplasm</keyword>
<keyword id="KW-0648">Protein biosynthesis</keyword>
<keyword id="KW-0663">Pyridoxal phosphate</keyword>
<keyword id="KW-0711">Selenium</keyword>
<keyword id="KW-0808">Transferase</keyword>
<comment type="function">
    <text evidence="1">Converts seryl-tRNA(Sec) to selenocysteinyl-tRNA(Sec) required for selenoprotein biosynthesis.</text>
</comment>
<comment type="catalytic activity">
    <reaction evidence="1">
        <text>L-seryl-tRNA(Sec) + selenophosphate + H(+) = L-selenocysteinyl-tRNA(Sec) + phosphate</text>
        <dbReference type="Rhea" id="RHEA:22728"/>
        <dbReference type="Rhea" id="RHEA-COMP:9742"/>
        <dbReference type="Rhea" id="RHEA-COMP:9743"/>
        <dbReference type="ChEBI" id="CHEBI:15378"/>
        <dbReference type="ChEBI" id="CHEBI:16144"/>
        <dbReference type="ChEBI" id="CHEBI:43474"/>
        <dbReference type="ChEBI" id="CHEBI:78533"/>
        <dbReference type="ChEBI" id="CHEBI:78573"/>
        <dbReference type="EC" id="2.9.1.1"/>
    </reaction>
</comment>
<comment type="cofactor">
    <cofactor evidence="1">
        <name>pyridoxal 5'-phosphate</name>
        <dbReference type="ChEBI" id="CHEBI:597326"/>
    </cofactor>
</comment>
<comment type="pathway">
    <text evidence="1">Aminoacyl-tRNA biosynthesis; selenocysteinyl-tRNA(Sec) biosynthesis; selenocysteinyl-tRNA(Sec) from L-seryl-tRNA(Sec) (bacterial route): step 1/1.</text>
</comment>
<comment type="subunit">
    <text evidence="1">Homodecamer; pentamer of dimers. Binds only one seryl-tRNA(Sec) per dimer.</text>
</comment>
<comment type="subcellular location">
    <subcellularLocation>
        <location evidence="1">Cytoplasm</location>
    </subcellularLocation>
</comment>
<comment type="similarity">
    <text evidence="1">Belongs to the SelA family.</text>
</comment>
<accession>B7N237</accession>
<proteinExistence type="inferred from homology"/>
<sequence>MTTETRSLYSQLPAIDRLLRDSSFLSLRDTYGHTRVVELLRQMLDEAREVIRDSQTLPAWCENWAQEVDARLTKEAQSALRPVINLTGTVLHTNLGRALQAEAAVEAVMKAMRSPVTLEYDLDDAGRGHRDRALAQLLCRITGAEDACIVNNNAAAVLLMLAATASGKEVVVSRGELVEIGGAFRIPDVMRQAGCTLHEVGTTNRTHANDYRQAVNENTALLMKVHTSNYSIQGFTKAIDEAELVALGKELDVPVVTDLGSGSLVDLSQYGLPKEPMPQELIAAGVSLVSFSGDKLLGGPQAGIIVGKKEMIARLQSHPLKRALRADKMTLAALEATLRLYLHPEALSEKLPTLRLLTRSAEVIQIQAQRLQAPLAAHYGAEFAVQVMPCLSQIGSGSLPVDRLPSAALTFTPHDGRGSHLESLAARWRELPVPVIGRIYDGRLWLDLRCLEDEQRFLEMLLK</sequence>
<reference key="1">
    <citation type="journal article" date="2009" name="PLoS Genet.">
        <title>Organised genome dynamics in the Escherichia coli species results in highly diverse adaptive paths.</title>
        <authorList>
            <person name="Touchon M."/>
            <person name="Hoede C."/>
            <person name="Tenaillon O."/>
            <person name="Barbe V."/>
            <person name="Baeriswyl S."/>
            <person name="Bidet P."/>
            <person name="Bingen E."/>
            <person name="Bonacorsi S."/>
            <person name="Bouchier C."/>
            <person name="Bouvet O."/>
            <person name="Calteau A."/>
            <person name="Chiapello H."/>
            <person name="Clermont O."/>
            <person name="Cruveiller S."/>
            <person name="Danchin A."/>
            <person name="Diard M."/>
            <person name="Dossat C."/>
            <person name="Karoui M.E."/>
            <person name="Frapy E."/>
            <person name="Garry L."/>
            <person name="Ghigo J.M."/>
            <person name="Gilles A.M."/>
            <person name="Johnson J."/>
            <person name="Le Bouguenec C."/>
            <person name="Lescat M."/>
            <person name="Mangenot S."/>
            <person name="Martinez-Jehanne V."/>
            <person name="Matic I."/>
            <person name="Nassif X."/>
            <person name="Oztas S."/>
            <person name="Petit M.A."/>
            <person name="Pichon C."/>
            <person name="Rouy Z."/>
            <person name="Ruf C.S."/>
            <person name="Schneider D."/>
            <person name="Tourret J."/>
            <person name="Vacherie B."/>
            <person name="Vallenet D."/>
            <person name="Medigue C."/>
            <person name="Rocha E.P.C."/>
            <person name="Denamur E."/>
        </authorList>
    </citation>
    <scope>NUCLEOTIDE SEQUENCE [LARGE SCALE GENOMIC DNA]</scope>
    <source>
        <strain>ED1a</strain>
    </source>
</reference>